<organism>
    <name type="scientific">Homo sapiens</name>
    <name type="common">Human</name>
    <dbReference type="NCBI Taxonomy" id="9606"/>
    <lineage>
        <taxon>Eukaryota</taxon>
        <taxon>Metazoa</taxon>
        <taxon>Chordata</taxon>
        <taxon>Craniata</taxon>
        <taxon>Vertebrata</taxon>
        <taxon>Euteleostomi</taxon>
        <taxon>Mammalia</taxon>
        <taxon>Eutheria</taxon>
        <taxon>Euarchontoglires</taxon>
        <taxon>Primates</taxon>
        <taxon>Haplorrhini</taxon>
        <taxon>Catarrhini</taxon>
        <taxon>Hominidae</taxon>
        <taxon>Homo</taxon>
    </lineage>
</organism>
<feature type="chain" id="PRO_0000295719" description="Bridge-like lipid transfer protein family member 3B">
    <location>
        <begin position="1"/>
        <end position="1464"/>
    </location>
</feature>
<feature type="domain" description="Chorein N-terminal" evidence="2">
    <location>
        <begin position="3"/>
        <end position="94"/>
    </location>
</feature>
<feature type="region of interest" description="Disordered" evidence="3">
    <location>
        <begin position="267"/>
        <end position="297"/>
    </location>
</feature>
<feature type="region of interest" description="Disordered" evidence="3">
    <location>
        <begin position="409"/>
        <end position="436"/>
    </location>
</feature>
<feature type="region of interest" description="Disordered" evidence="3">
    <location>
        <begin position="1066"/>
        <end position="1089"/>
    </location>
</feature>
<feature type="region of interest" description="Disordered" evidence="3">
    <location>
        <begin position="1164"/>
        <end position="1183"/>
    </location>
</feature>
<feature type="region of interest" description="Disordered" evidence="3">
    <location>
        <begin position="1392"/>
        <end position="1413"/>
    </location>
</feature>
<feature type="coiled-coil region" evidence="2">
    <location>
        <begin position="1418"/>
        <end position="1456"/>
    </location>
</feature>
<feature type="compositionally biased region" description="Polar residues" evidence="3">
    <location>
        <begin position="278"/>
        <end position="297"/>
    </location>
</feature>
<feature type="compositionally biased region" description="Polar residues" evidence="3">
    <location>
        <begin position="1164"/>
        <end position="1182"/>
    </location>
</feature>
<feature type="compositionally biased region" description="Polar residues" evidence="3">
    <location>
        <begin position="1394"/>
        <end position="1413"/>
    </location>
</feature>
<feature type="modified residue" description="Phosphoserine" evidence="12 14">
    <location>
        <position position="414"/>
    </location>
</feature>
<feature type="modified residue" description="Phosphoserine" evidence="14">
    <location>
        <position position="418"/>
    </location>
</feature>
<feature type="modified residue" description="Phosphoserine" evidence="13">
    <location>
        <position position="774"/>
    </location>
</feature>
<feature type="modified residue" description="Phosphoserine" evidence="1">
    <location>
        <position position="935"/>
    </location>
</feature>
<feature type="modified residue" description="Phosphoserine" evidence="1">
    <location>
        <position position="1009"/>
    </location>
</feature>
<feature type="splice variant" id="VSP_027014" description="In isoform 2." evidence="7">
    <original>IPSPNL</original>
    <variation>TAFLSR</variation>
    <location>
        <begin position="517"/>
        <end position="522"/>
    </location>
</feature>
<feature type="splice variant" id="VSP_027015" description="In isoform 2." evidence="7">
    <location>
        <begin position="523"/>
        <end position="1464"/>
    </location>
</feature>
<feature type="sequence variant" id="VAR_061719" description="In dbSNP:rs58214704.">
    <original>M</original>
    <variation>L</variation>
    <location>
        <position position="1111"/>
    </location>
</feature>
<feature type="sequence variant" id="VAR_051467" description="In dbSNP:rs7296162." evidence="4">
    <original>S</original>
    <variation>L</variation>
    <location>
        <position position="1147"/>
    </location>
</feature>
<feature type="sequence variant" id="VAR_051468" description="In dbSNP:rs17029945.">
    <original>I</original>
    <variation>V</variation>
    <location>
        <position position="1175"/>
    </location>
</feature>
<feature type="mutagenesis site" description="Abolishes interaction with STX6. No effect on early endosome location." evidence="6">
    <original>YY</original>
    <variation>AA</variation>
    <location>
        <begin position="772"/>
        <end position="773"/>
    </location>
</feature>
<feature type="sequence conflict" description="In Ref. 1; AAH14891." evidence="9" ref="1">
    <original>T</original>
    <variation>I</variation>
    <location>
        <position position="283"/>
    </location>
</feature>
<dbReference type="EMBL" id="BC003391">
    <property type="protein sequence ID" value="AAH03391.1"/>
    <property type="molecule type" value="mRNA"/>
</dbReference>
<dbReference type="EMBL" id="BC014891">
    <property type="protein sequence ID" value="AAH14891.1"/>
    <property type="molecule type" value="mRNA"/>
</dbReference>
<dbReference type="EMBL" id="BC127017">
    <property type="protein sequence ID" value="AAI27018.1"/>
    <property type="status" value="ALT_FRAME"/>
    <property type="molecule type" value="mRNA"/>
</dbReference>
<dbReference type="EMBL" id="BC026286">
    <property type="protein sequence ID" value="AAH26286.1"/>
    <property type="molecule type" value="mRNA"/>
</dbReference>
<dbReference type="EMBL" id="AB014601">
    <property type="protein sequence ID" value="BAA31676.2"/>
    <property type="molecule type" value="mRNA"/>
</dbReference>
<dbReference type="EMBL" id="AL136821">
    <property type="protein sequence ID" value="CAB66755.1"/>
    <property type="status" value="ALT_INIT"/>
    <property type="molecule type" value="mRNA"/>
</dbReference>
<dbReference type="EMBL" id="AL833850">
    <property type="protein sequence ID" value="CAD38709.1"/>
    <property type="molecule type" value="mRNA"/>
</dbReference>
<dbReference type="CCDS" id="CCDS31882.1">
    <molecule id="A0JNW5-1"/>
</dbReference>
<dbReference type="CCDS" id="CCDS31883.1">
    <molecule id="A0JNW5-2"/>
</dbReference>
<dbReference type="PIR" id="T00352">
    <property type="entry name" value="T00352"/>
</dbReference>
<dbReference type="RefSeq" id="NP_001006948.1">
    <molecule id="A0JNW5-2"/>
    <property type="nucleotide sequence ID" value="NM_001006947.2"/>
</dbReference>
<dbReference type="RefSeq" id="NP_055869.1">
    <molecule id="A0JNW5-1"/>
    <property type="nucleotide sequence ID" value="NM_015054.2"/>
</dbReference>
<dbReference type="SMR" id="A0JNW5"/>
<dbReference type="BioGRID" id="116706">
    <property type="interactions" value="79"/>
</dbReference>
<dbReference type="FunCoup" id="A0JNW5">
    <property type="interactions" value="2232"/>
</dbReference>
<dbReference type="IntAct" id="A0JNW5">
    <property type="interactions" value="40"/>
</dbReference>
<dbReference type="MINT" id="A0JNW5"/>
<dbReference type="STRING" id="9606.ENSP00000279907"/>
<dbReference type="TCDB" id="1.R.2.1.1">
    <property type="family name" value="the bridge-like lipid transfer protein (bltp) family"/>
</dbReference>
<dbReference type="GlyGen" id="A0JNW5">
    <property type="glycosylation" value="4 sites, 2 N-linked glycans (2 sites), 1 O-linked glycan (1 site)"/>
</dbReference>
<dbReference type="iPTMnet" id="A0JNW5"/>
<dbReference type="PhosphoSitePlus" id="A0JNW5"/>
<dbReference type="SwissPalm" id="A0JNW5"/>
<dbReference type="BioMuta" id="UHRF1BP1L"/>
<dbReference type="jPOST" id="A0JNW5"/>
<dbReference type="MassIVE" id="A0JNW5"/>
<dbReference type="PaxDb" id="9606-ENSP00000279907"/>
<dbReference type="PeptideAtlas" id="A0JNW5"/>
<dbReference type="ProteomicsDB" id="41">
    <molecule id="A0JNW5-1"/>
</dbReference>
<dbReference type="ProteomicsDB" id="42">
    <molecule id="A0JNW5-2"/>
</dbReference>
<dbReference type="Pumba" id="A0JNW5"/>
<dbReference type="Antibodypedia" id="30285">
    <property type="antibodies" value="129 antibodies from 24 providers"/>
</dbReference>
<dbReference type="DNASU" id="23074"/>
<dbReference type="Ensembl" id="ENST00000279907.12">
    <molecule id="A0JNW5-1"/>
    <property type="protein sequence ID" value="ENSP00000279907.7"/>
    <property type="gene ID" value="ENSG00000111647.13"/>
</dbReference>
<dbReference type="Ensembl" id="ENST00000356828.7">
    <molecule id="A0JNW5-2"/>
    <property type="protein sequence ID" value="ENSP00000349285.3"/>
    <property type="gene ID" value="ENSG00000111647.13"/>
</dbReference>
<dbReference type="GeneID" id="23074"/>
<dbReference type="KEGG" id="hsa:23074"/>
<dbReference type="MANE-Select" id="ENST00000279907.12">
    <property type="protein sequence ID" value="ENSP00000279907.7"/>
    <property type="RefSeq nucleotide sequence ID" value="NM_015054.2"/>
    <property type="RefSeq protein sequence ID" value="NP_055869.1"/>
</dbReference>
<dbReference type="UCSC" id="uc001tgp.4">
    <molecule id="A0JNW5-1"/>
    <property type="organism name" value="human"/>
</dbReference>
<dbReference type="AGR" id="HGNC:29102"/>
<dbReference type="CTD" id="23074"/>
<dbReference type="DisGeNET" id="23074"/>
<dbReference type="GeneCards" id="BLTP3B"/>
<dbReference type="HGNC" id="HGNC:29102">
    <property type="gene designation" value="BLTP3B"/>
</dbReference>
<dbReference type="HPA" id="ENSG00000111647">
    <property type="expression patterns" value="Low tissue specificity"/>
</dbReference>
<dbReference type="MIM" id="619811">
    <property type="type" value="gene"/>
</dbReference>
<dbReference type="neXtProt" id="NX_A0JNW5"/>
<dbReference type="OpenTargets" id="ENSG00000111647"/>
<dbReference type="PharmGKB" id="PA162408577"/>
<dbReference type="VEuPathDB" id="HostDB:ENSG00000111647"/>
<dbReference type="eggNOG" id="KOG2955">
    <property type="taxonomic scope" value="Eukaryota"/>
</dbReference>
<dbReference type="GeneTree" id="ENSGT00600000084428"/>
<dbReference type="HOGENOM" id="CLU_004782_0_0_1"/>
<dbReference type="InParanoid" id="A0JNW5"/>
<dbReference type="OMA" id="STAEQCH"/>
<dbReference type="OrthoDB" id="7944at9604"/>
<dbReference type="PAN-GO" id="A0JNW5">
    <property type="GO annotations" value="0 GO annotations based on evolutionary models"/>
</dbReference>
<dbReference type="PhylomeDB" id="A0JNW5"/>
<dbReference type="TreeFam" id="TF314874"/>
<dbReference type="PathwayCommons" id="A0JNW5"/>
<dbReference type="Reactome" id="R-HSA-9696270">
    <property type="pathway name" value="RND2 GTPase cycle"/>
</dbReference>
<dbReference type="SignaLink" id="A0JNW5"/>
<dbReference type="BioGRID-ORCS" id="23074">
    <property type="hits" value="13 hits in 1150 CRISPR screens"/>
</dbReference>
<dbReference type="ChiTaRS" id="UHRF1BP1L">
    <property type="organism name" value="human"/>
</dbReference>
<dbReference type="GenomeRNAi" id="23074"/>
<dbReference type="Pharos" id="A0JNW5">
    <property type="development level" value="Tbio"/>
</dbReference>
<dbReference type="PRO" id="PR:A0JNW5"/>
<dbReference type="Proteomes" id="UP000005640">
    <property type="component" value="Chromosome 12"/>
</dbReference>
<dbReference type="RNAct" id="A0JNW5">
    <property type="molecule type" value="protein"/>
</dbReference>
<dbReference type="Bgee" id="ENSG00000111647">
    <property type="expression patterns" value="Expressed in cartilage tissue and 195 other cell types or tissues"/>
</dbReference>
<dbReference type="ExpressionAtlas" id="A0JNW5">
    <property type="expression patterns" value="baseline and differential"/>
</dbReference>
<dbReference type="GO" id="GO:0005829">
    <property type="term" value="C:cytosol"/>
    <property type="evidence" value="ECO:0000314"/>
    <property type="project" value="UniProtKB"/>
</dbReference>
<dbReference type="GO" id="GO:0005769">
    <property type="term" value="C:early endosome"/>
    <property type="evidence" value="ECO:0000314"/>
    <property type="project" value="UniProtKB"/>
</dbReference>
<dbReference type="GO" id="GO:0062069">
    <property type="term" value="F:GARP complex binding"/>
    <property type="evidence" value="ECO:0000314"/>
    <property type="project" value="UniProtKB"/>
</dbReference>
<dbReference type="GO" id="GO:0120013">
    <property type="term" value="F:lipid transfer activity"/>
    <property type="evidence" value="ECO:0000314"/>
    <property type="project" value="UniProtKB"/>
</dbReference>
<dbReference type="GO" id="GO:0042803">
    <property type="term" value="F:protein homodimerization activity"/>
    <property type="evidence" value="ECO:0000353"/>
    <property type="project" value="UniProtKB"/>
</dbReference>
<dbReference type="GO" id="GO:0034498">
    <property type="term" value="P:early endosome to Golgi transport"/>
    <property type="evidence" value="ECO:0000314"/>
    <property type="project" value="UniProtKB"/>
</dbReference>
<dbReference type="GO" id="GO:0120009">
    <property type="term" value="P:intermembrane lipid transfer"/>
    <property type="evidence" value="ECO:0000314"/>
    <property type="project" value="UniProtKB"/>
</dbReference>
<dbReference type="InterPro" id="IPR026728">
    <property type="entry name" value="BLTP3A/B"/>
</dbReference>
<dbReference type="PANTHER" id="PTHR22774:SF17">
    <property type="entry name" value="BRIDGE-LIKE LIPID TRANSFER PROTEIN FAMILY MEMBER 3B"/>
    <property type="match status" value="1"/>
</dbReference>
<dbReference type="PANTHER" id="PTHR22774">
    <property type="entry name" value="CHOREIN N-TERMINAL DOMAIN-CONTAINING PROTEIN"/>
    <property type="match status" value="1"/>
</dbReference>
<dbReference type="Pfam" id="PF24917">
    <property type="entry name" value="BLTP3A_B"/>
    <property type="match status" value="1"/>
</dbReference>
<name>BLT3B_HUMAN</name>
<protein>
    <recommendedName>
        <fullName evidence="11">Bridge-like lipid transfer protein family member 3B</fullName>
    </recommendedName>
    <alternativeName>
        <fullName evidence="8">Syntaxin-6 Habc-interacting protein of 164 kDa</fullName>
    </alternativeName>
    <alternativeName>
        <fullName>UHRF1-binding protein 1-like</fullName>
    </alternativeName>
</protein>
<proteinExistence type="evidence at protein level"/>
<accession>A0JNW5</accession>
<accession>A0PJE5</accession>
<accession>O75183</accession>
<accession>Q8NDL1</accession>
<accession>Q96C30</accession>
<accession>Q9BTS5</accession>
<accession>Q9H0F1</accession>
<gene>
    <name evidence="11" type="primary">BLTP3B</name>
    <name evidence="10" type="synonym">KIAA0701</name>
    <name evidence="8" type="synonym">SHIP164</name>
    <name type="synonym">UHRF1BP1L</name>
</gene>
<comment type="function">
    <text evidence="5 6">Tube-forming lipid transport protein which mediates the transfer of lipids between membranes at organelle contact sites (PubMed:35499567). Required for retrograde traffic of vesicle clusters in the early endocytic pathway to the Golgi complex (PubMed:20163565, PubMed:35499567).</text>
</comment>
<comment type="subunit">
    <text evidence="5 6">Monomer. Homodimer (via N-terminus). Associates with the Golgi-associated retrograde protein (GARP) complex. Interacts with GARP complex component VPS52 (PubMed:20163565). Interacts (via C-terminal coiled-coil domain) with STX6 (PubMed:20163565, PubMed:35499567).</text>
</comment>
<comment type="subcellular location">
    <subcellularLocation>
        <location evidence="5">Cytoplasm</location>
        <location evidence="5">Cytosol</location>
    </subcellularLocation>
    <subcellularLocation>
        <location evidence="5 6">Early endosome</location>
    </subcellularLocation>
    <text evidence="6">Localizes on a subpopulation of vesicle clusters in the early endocytic pathway.</text>
</comment>
<comment type="alternative products">
    <event type="alternative splicing"/>
    <isoform>
        <id>A0JNW5-1</id>
        <name>1</name>
        <sequence type="displayed"/>
    </isoform>
    <isoform>
        <id>A0JNW5-2</id>
        <name>2</name>
        <sequence type="described" ref="VSP_027014 VSP_027015"/>
    </isoform>
</comment>
<comment type="sequence caution" evidence="9">
    <conflict type="frameshift">
        <sequence resource="EMBL-CDS" id="AAI27018"/>
    </conflict>
</comment>
<comment type="sequence caution" evidence="9">
    <conflict type="erroneous initiation">
        <sequence resource="EMBL-CDS" id="CAB66755"/>
    </conflict>
    <text>Truncated N-terminus.</text>
</comment>
<evidence type="ECO:0000250" key="1">
    <source>
        <dbReference type="UniProtKB" id="A2RSJ4"/>
    </source>
</evidence>
<evidence type="ECO:0000255" key="2"/>
<evidence type="ECO:0000256" key="3">
    <source>
        <dbReference type="SAM" id="MobiDB-lite"/>
    </source>
</evidence>
<evidence type="ECO:0000269" key="4">
    <source>
    </source>
</evidence>
<evidence type="ECO:0000269" key="5">
    <source>
    </source>
</evidence>
<evidence type="ECO:0000269" key="6">
    <source>
    </source>
</evidence>
<evidence type="ECO:0000303" key="7">
    <source>
    </source>
</evidence>
<evidence type="ECO:0000303" key="8">
    <source>
    </source>
</evidence>
<evidence type="ECO:0000305" key="9"/>
<evidence type="ECO:0000312" key="10">
    <source>
        <dbReference type="EMBL" id="BAA31676.2"/>
    </source>
</evidence>
<evidence type="ECO:0000312" key="11">
    <source>
        <dbReference type="HGNC" id="HGNC:29102"/>
    </source>
</evidence>
<evidence type="ECO:0007744" key="12">
    <source>
    </source>
</evidence>
<evidence type="ECO:0007744" key="13">
    <source>
    </source>
</evidence>
<evidence type="ECO:0007744" key="14">
    <source>
    </source>
</evidence>
<reference key="1">
    <citation type="journal article" date="2004" name="Genome Res.">
        <title>The status, quality, and expansion of the NIH full-length cDNA project: the Mammalian Gene Collection (MGC).</title>
        <authorList>
            <consortium name="The MGC Project Team"/>
        </authorList>
    </citation>
    <scope>NUCLEOTIDE SEQUENCE [LARGE SCALE MRNA] (ISOFORMS 1 AND 2)</scope>
    <scope>VARIANT LEU-1147</scope>
    <source>
        <tissue>Placenta</tissue>
        <tissue>Uterus</tissue>
    </source>
</reference>
<reference key="2">
    <citation type="journal article" date="1998" name="DNA Res.">
        <title>Prediction of the coding sequences of unidentified human genes. X. The complete sequences of 100 new cDNA clones from brain which can code for large proteins in vitro.</title>
        <authorList>
            <person name="Ishikawa K."/>
            <person name="Nagase T."/>
            <person name="Suyama M."/>
            <person name="Miyajima N."/>
            <person name="Tanaka A."/>
            <person name="Kotani H."/>
            <person name="Nomura N."/>
            <person name="Ohara O."/>
        </authorList>
    </citation>
    <scope>NUCLEOTIDE SEQUENCE [LARGE SCALE MRNA] OF 111-1464 (ISOFORM 1)</scope>
    <source>
        <tissue>Brain</tissue>
    </source>
</reference>
<reference key="3">
    <citation type="journal article" date="2002" name="DNA Res.">
        <title>Construction of expression-ready cDNA clones for KIAA genes: manual curation of 330 KIAA cDNA clones.</title>
        <authorList>
            <person name="Nakajima D."/>
            <person name="Okazaki N."/>
            <person name="Yamakawa H."/>
            <person name="Kikuno R."/>
            <person name="Ohara O."/>
            <person name="Nagase T."/>
        </authorList>
    </citation>
    <scope>SEQUENCE REVISION</scope>
</reference>
<reference key="4">
    <citation type="journal article" date="2001" name="Genome Res.">
        <title>Towards a catalog of human genes and proteins: sequencing and analysis of 500 novel complete protein coding human cDNAs.</title>
        <authorList>
            <person name="Wiemann S."/>
            <person name="Weil B."/>
            <person name="Wellenreuther R."/>
            <person name="Gassenhuber J."/>
            <person name="Glassl S."/>
            <person name="Ansorge W."/>
            <person name="Boecher M."/>
            <person name="Bloecker H."/>
            <person name="Bauersachs S."/>
            <person name="Blum H."/>
            <person name="Lauber J."/>
            <person name="Duesterhoeft A."/>
            <person name="Beyer A."/>
            <person name="Koehrer K."/>
            <person name="Strack N."/>
            <person name="Mewes H.-W."/>
            <person name="Ottenwaelder B."/>
            <person name="Obermaier B."/>
            <person name="Tampe J."/>
            <person name="Heubner D."/>
            <person name="Wambutt R."/>
            <person name="Korn B."/>
            <person name="Klein M."/>
            <person name="Poustka A."/>
        </authorList>
    </citation>
    <scope>NUCLEOTIDE SEQUENCE [LARGE SCALE MRNA] OF 323-1464 (ISOFORM 1)</scope>
    <source>
        <tissue>Testis</tissue>
    </source>
</reference>
<reference key="5">
    <citation type="journal article" date="2007" name="BMC Genomics">
        <title>The full-ORF clone resource of the German cDNA consortium.</title>
        <authorList>
            <person name="Bechtel S."/>
            <person name="Rosenfelder H."/>
            <person name="Duda A."/>
            <person name="Schmidt C.P."/>
            <person name="Ernst U."/>
            <person name="Wellenreuther R."/>
            <person name="Mehrle A."/>
            <person name="Schuster C."/>
            <person name="Bahr A."/>
            <person name="Bloecker H."/>
            <person name="Heubner D."/>
            <person name="Hoerlein A."/>
            <person name="Michel G."/>
            <person name="Wedler H."/>
            <person name="Koehrer K."/>
            <person name="Ottenwaelder B."/>
            <person name="Poustka A."/>
            <person name="Wiemann S."/>
            <person name="Schupp I."/>
        </authorList>
    </citation>
    <scope>NUCLEOTIDE SEQUENCE [LARGE SCALE MRNA] OF 440-1464 (ISOFORM 1)</scope>
    <source>
        <tissue>Testis</tissue>
    </source>
</reference>
<reference key="6">
    <citation type="journal article" date="2008" name="Proc. Natl. Acad. Sci. U.S.A.">
        <title>A quantitative atlas of mitotic phosphorylation.</title>
        <authorList>
            <person name="Dephoure N."/>
            <person name="Zhou C."/>
            <person name="Villen J."/>
            <person name="Beausoleil S.A."/>
            <person name="Bakalarski C.E."/>
            <person name="Elledge S.J."/>
            <person name="Gygi S.P."/>
        </authorList>
    </citation>
    <scope>IDENTIFICATION BY MASS SPECTROMETRY [LARGE SCALE ANALYSIS]</scope>
    <source>
        <tissue>Cervix carcinoma</tissue>
    </source>
</reference>
<reference key="7">
    <citation type="journal article" date="2010" name="Traffic">
        <title>A novel syntaxin 6-interacting protein, SHIP164, regulates syntaxin 6-dependent sorting from early endosomes.</title>
        <authorList>
            <person name="Otto G.P."/>
            <person name="Razi M."/>
            <person name="Morvan J."/>
            <person name="Stenner F."/>
            <person name="Tooze S.A."/>
        </authorList>
    </citation>
    <scope>SUBUNIT</scope>
    <scope>INTERACTION WITH STX6</scope>
    <scope>ASSOCIATION WITH THE GARP COMPLEX</scope>
    <scope>SUBCELLULAR LOCATION</scope>
    <scope>IDENTIFICATION BY MASS SPECTROMETRY</scope>
    <scope>FUNCTION</scope>
</reference>
<reference key="8">
    <citation type="journal article" date="2011" name="Sci. Signal.">
        <title>System-wide temporal characterization of the proteome and phosphoproteome of human embryonic stem cell differentiation.</title>
        <authorList>
            <person name="Rigbolt K.T."/>
            <person name="Prokhorova T.A."/>
            <person name="Akimov V."/>
            <person name="Henningsen J."/>
            <person name="Johansen P.T."/>
            <person name="Kratchmarova I."/>
            <person name="Kassem M."/>
            <person name="Mann M."/>
            <person name="Olsen J.V."/>
            <person name="Blagoev B."/>
        </authorList>
    </citation>
    <scope>PHOSPHORYLATION [LARGE SCALE ANALYSIS] AT SER-414</scope>
    <scope>IDENTIFICATION BY MASS SPECTROMETRY [LARGE SCALE ANALYSIS]</scope>
</reference>
<reference key="9">
    <citation type="journal article" date="2013" name="J. Proteome Res.">
        <title>Toward a comprehensive characterization of a human cancer cell phosphoproteome.</title>
        <authorList>
            <person name="Zhou H."/>
            <person name="Di Palma S."/>
            <person name="Preisinger C."/>
            <person name="Peng M."/>
            <person name="Polat A.N."/>
            <person name="Heck A.J."/>
            <person name="Mohammed S."/>
        </authorList>
    </citation>
    <scope>PHOSPHORYLATION [LARGE SCALE ANALYSIS] AT SER-774</scope>
    <scope>IDENTIFICATION BY MASS SPECTROMETRY [LARGE SCALE ANALYSIS]</scope>
    <source>
        <tissue>Cervix carcinoma</tissue>
        <tissue>Erythroleukemia</tissue>
    </source>
</reference>
<reference key="10">
    <citation type="journal article" date="2014" name="J. Proteomics">
        <title>An enzyme assisted RP-RPLC approach for in-depth analysis of human liver phosphoproteome.</title>
        <authorList>
            <person name="Bian Y."/>
            <person name="Song C."/>
            <person name="Cheng K."/>
            <person name="Dong M."/>
            <person name="Wang F."/>
            <person name="Huang J."/>
            <person name="Sun D."/>
            <person name="Wang L."/>
            <person name="Ye M."/>
            <person name="Zou H."/>
        </authorList>
    </citation>
    <scope>PHOSPHORYLATION [LARGE SCALE ANALYSIS] AT SER-414 AND SER-418</scope>
    <scope>IDENTIFICATION BY MASS SPECTROMETRY [LARGE SCALE ANALYSIS]</scope>
    <source>
        <tissue>Liver</tissue>
    </source>
</reference>
<reference key="11">
    <citation type="journal article" date="2022" name="J. Cell Biol.">
        <title>SHIP164 is a chorein motif lipid transfer protein that controls endosome-Golgi membrane traffic.</title>
        <authorList>
            <person name="Hanna M.G."/>
            <person name="Suen P.H."/>
            <person name="Wu Y."/>
            <person name="Reinisch K.M."/>
            <person name="De Camilli P."/>
        </authorList>
    </citation>
    <scope>FUNCTION</scope>
    <scope>SUBCELLULAR LOCATION</scope>
    <scope>INTERACTION WITH STX6</scope>
    <scope>MUTAGENESIS OF 772-TYR-TYR-773</scope>
</reference>
<reference key="12">
    <citation type="journal article" date="2022" name="Trends Cell Biol.">
        <title>A novel superfamily of bridge-like lipid transfer proteins.</title>
        <authorList>
            <person name="Neuman S.D."/>
            <person name="Levine T.P."/>
            <person name="Bashirullah A."/>
        </authorList>
    </citation>
    <scope>REVIEW OF FUNCTION</scope>
</reference>
<keyword id="KW-0025">Alternative splicing</keyword>
<keyword id="KW-0175">Coiled coil</keyword>
<keyword id="KW-0963">Cytoplasm</keyword>
<keyword id="KW-0967">Endosome</keyword>
<keyword id="KW-0597">Phosphoprotein</keyword>
<keyword id="KW-1267">Proteomics identification</keyword>
<keyword id="KW-1185">Reference proteome</keyword>
<sequence length="1464" mass="164199">MAGIIKKQILKHLSRFTKNLSPDKINLSTLKGEGELKNLELDEEVLQNMLDLPTWLAINKVFCNKASIRIPWTKLKTHPICLSLDKVIMEMSTCEEPRSPNGPSPIATASGQSEYGFAEKVVEGISVSVNSIVIRIGAKAFNASFELSQLRIYSVNAHWEHGDLRFTRIQDPQRGEVLTFKEINWQMIRIEADATQSSHLEIMCAPVRLITNQSKIRVTLKRRLKDCNVIATKLVLILDDLLWVLTDSQLKAMVQYAKSLSEAIEKSTEQRKSMAPEPTQSSTVVASAQQVKTTQTSNAPDVNDAIVKLFNDFDVKETSHHLVISHLDLHICDDIHAKEKESNRRITGGAMQLSFTQLTIDYYPYHKAGDSCNHWMYFSDATKTKNGWANELLHEFECNVEMLKQAVKDHNVGSPPKSPTHASPQHTQTEKDYPLKGTCRTPSVLSQQSKAKLMSSSVVVRLADFNIYQVSTAEQCRSSPKSMICCNKKSLYLPQEMSAVYIEFTEYYYPDGKDFPIPSPNLYSQLNALQFTVDERSILWLNQFLLDLKQSLNQFMAVYKLNDNSKSDEHVDVRVDGLMLKFVIPSEVKSECHQDQPRAISIQSSEMIATNTRHCPNCRHSDLEALFQDFKDCDFFSKTYTSFPKSCDNFNLLHPIFQRHAHEQDTKMHEIYKGNITPQLNKNTLKTSAATDVWAVYFSQFWIDYEGMKSGKGRPISFVDSFPLSIWICQPTRYAESQKEPQTCNQVSLNTSQSESSDLAGRLKRKKLLKEYYSTESEPLTNGGQKPSSSDTFFRFSPSSSEADIHLLVHVHKHVSMQINHYQYLLLLFLHESLILLSENLRKDVEAVTGSPASQTSICIGILLRSAELALLLHPVDQANTLKSPVSESVSPVVPDYLPTENGDFLSSKRKQISRDINRIRSVTVNHMSDNRSMSVDLSHIPLKDPLLFKSASDTNLQKGISFMDYLSDKHLGKISEDESSGLVYKSGSGEIGSETSDKKDSFYTDSSSILNYREDSNILSFDSDGNQNILSSTLTSKGNETIESIFKAEDLLPEAASLSENLDISKEETPPVRTLKSQSSLSGKPKERCPPNLAPLCVSYKNMKRSSSQMSLDTISLDSMILEEQLLESDGSDSHMFLEKGNKKNSTTNYRGTAESVNAGANLQNYGETSPDAISTNSEGAQENHDDLMSVVVFKITGVNGEIDIRGEDTEICLQVNQVTPDQLGNISLRHYLCNRPVGSDQKAVIHSKSSPEISLRFESGPGAVIHSLLAEKNGFLQCHIENFSTEFLTSSLMNIQHFLEDETVATVMPMKIQVSNTKINLKDDSPRSSTVSLEPAPVTVHIDHLVVERSDDGSFHIRDSHMLNTGNDLKENVKSDSVLLTSGKYDLKKQRSVTQATQTSPGVPWPSQSANFPEFSFDFTREQLMEENESLKQELAKAKMALAEAHLEKDALLHHIKKMTVE</sequence>